<dbReference type="EMBL" id="U10362">
    <property type="protein sequence ID" value="AAA19572.1"/>
    <property type="molecule type" value="mRNA"/>
</dbReference>
<dbReference type="EMBL" id="AK222609">
    <property type="protein sequence ID" value="BAD96329.1"/>
    <property type="molecule type" value="mRNA"/>
</dbReference>
<dbReference type="EMBL" id="BC017263">
    <property type="protein sequence ID" value="AAH17263.1"/>
    <property type="molecule type" value="mRNA"/>
</dbReference>
<dbReference type="CCDS" id="CCDS4417.1"/>
<dbReference type="PIR" id="G01447">
    <property type="entry name" value="G01447"/>
</dbReference>
<dbReference type="RefSeq" id="NP_006807.1">
    <property type="nucleotide sequence ID" value="NM_006816.3"/>
</dbReference>
<dbReference type="SMR" id="Q12907"/>
<dbReference type="BioGRID" id="116159">
    <property type="interactions" value="145"/>
</dbReference>
<dbReference type="FunCoup" id="Q12907">
    <property type="interactions" value="2159"/>
</dbReference>
<dbReference type="IntAct" id="Q12907">
    <property type="interactions" value="54"/>
</dbReference>
<dbReference type="MINT" id="Q12907"/>
<dbReference type="STRING" id="9606.ENSP00000303366"/>
<dbReference type="TCDB" id="9.B.417.1.2">
    <property type="family name" value="the mcfd2/lman1 complex receptor (mlm-cr) family"/>
</dbReference>
<dbReference type="GlyConnect" id="1892">
    <property type="glycosylation" value="9 N-Linked glycans (1 site)"/>
</dbReference>
<dbReference type="GlyCosmos" id="Q12907">
    <property type="glycosylation" value="1 site, 8 glycans"/>
</dbReference>
<dbReference type="GlyGen" id="Q12907">
    <property type="glycosylation" value="6 sites, 45 N-linked glycans (1 site), 2 O-linked glycans (2 sites)"/>
</dbReference>
<dbReference type="iPTMnet" id="Q12907"/>
<dbReference type="PhosphoSitePlus" id="Q12907"/>
<dbReference type="SwissPalm" id="Q12907"/>
<dbReference type="BioMuta" id="LMAN2"/>
<dbReference type="DMDM" id="21264108"/>
<dbReference type="jPOST" id="Q12907"/>
<dbReference type="MassIVE" id="Q12907"/>
<dbReference type="PaxDb" id="9606-ENSP00000303366"/>
<dbReference type="PeptideAtlas" id="Q12907"/>
<dbReference type="PRIDE" id="Q12907"/>
<dbReference type="ProteomicsDB" id="59020"/>
<dbReference type="Pumba" id="Q12907"/>
<dbReference type="TopDownProteomics" id="Q12907"/>
<dbReference type="Antibodypedia" id="1119">
    <property type="antibodies" value="159 antibodies from 24 providers"/>
</dbReference>
<dbReference type="DNASU" id="10960"/>
<dbReference type="Ensembl" id="ENST00000303127.12">
    <property type="protein sequence ID" value="ENSP00000303366.7"/>
    <property type="gene ID" value="ENSG00000169223.16"/>
</dbReference>
<dbReference type="GeneID" id="10960"/>
<dbReference type="KEGG" id="hsa:10960"/>
<dbReference type="MANE-Select" id="ENST00000303127.12">
    <property type="protein sequence ID" value="ENSP00000303366.7"/>
    <property type="RefSeq nucleotide sequence ID" value="NM_006816.3"/>
    <property type="RefSeq protein sequence ID" value="NP_006807.1"/>
</dbReference>
<dbReference type="UCSC" id="uc003mge.4">
    <property type="organism name" value="human"/>
</dbReference>
<dbReference type="AGR" id="HGNC:16986"/>
<dbReference type="CTD" id="10960"/>
<dbReference type="DisGeNET" id="10960"/>
<dbReference type="GeneCards" id="LMAN2"/>
<dbReference type="HGNC" id="HGNC:16986">
    <property type="gene designation" value="LMAN2"/>
</dbReference>
<dbReference type="HPA" id="ENSG00000169223">
    <property type="expression patterns" value="Low tissue specificity"/>
</dbReference>
<dbReference type="MIM" id="609551">
    <property type="type" value="gene"/>
</dbReference>
<dbReference type="neXtProt" id="NX_Q12907"/>
<dbReference type="OpenTargets" id="ENSG00000169223"/>
<dbReference type="PharmGKB" id="PA25919"/>
<dbReference type="VEuPathDB" id="HostDB:ENSG00000169223"/>
<dbReference type="eggNOG" id="KOG3839">
    <property type="taxonomic scope" value="Eukaryota"/>
</dbReference>
<dbReference type="GeneTree" id="ENSGT00940000158355"/>
<dbReference type="InParanoid" id="Q12907"/>
<dbReference type="OMA" id="GCTADIR"/>
<dbReference type="OrthoDB" id="270293at2759"/>
<dbReference type="PAN-GO" id="Q12907">
    <property type="GO annotations" value="8 GO annotations based on evolutionary models"/>
</dbReference>
<dbReference type="PhylomeDB" id="Q12907"/>
<dbReference type="TreeFam" id="TF313311"/>
<dbReference type="PathwayCommons" id="Q12907"/>
<dbReference type="Reactome" id="R-HSA-204005">
    <property type="pathway name" value="COPII-mediated vesicle transport"/>
</dbReference>
<dbReference type="Reactome" id="R-HSA-5694530">
    <property type="pathway name" value="Cargo concentration in the ER"/>
</dbReference>
<dbReference type="SignaLink" id="Q12907"/>
<dbReference type="SIGNOR" id="Q12907"/>
<dbReference type="BioGRID-ORCS" id="10960">
    <property type="hits" value="29 hits in 1162 CRISPR screens"/>
</dbReference>
<dbReference type="ChiTaRS" id="LMAN2">
    <property type="organism name" value="human"/>
</dbReference>
<dbReference type="GeneWiki" id="LMAN2"/>
<dbReference type="GenomeRNAi" id="10960"/>
<dbReference type="Pharos" id="Q12907">
    <property type="development level" value="Tbio"/>
</dbReference>
<dbReference type="PRO" id="PR:Q12907"/>
<dbReference type="Proteomes" id="UP000005640">
    <property type="component" value="Chromosome 5"/>
</dbReference>
<dbReference type="RNAct" id="Q12907">
    <property type="molecule type" value="protein"/>
</dbReference>
<dbReference type="Bgee" id="ENSG00000169223">
    <property type="expression patterns" value="Expressed in stromal cell of endometrium and 204 other cell types or tissues"/>
</dbReference>
<dbReference type="ExpressionAtlas" id="Q12907">
    <property type="expression patterns" value="baseline and differential"/>
</dbReference>
<dbReference type="GO" id="GO:0009986">
    <property type="term" value="C:cell surface"/>
    <property type="evidence" value="ECO:0000314"/>
    <property type="project" value="UniProtKB"/>
</dbReference>
<dbReference type="GO" id="GO:0030134">
    <property type="term" value="C:COPII-coated ER to Golgi transport vesicle"/>
    <property type="evidence" value="ECO:0000318"/>
    <property type="project" value="GO_Central"/>
</dbReference>
<dbReference type="GO" id="GO:0005789">
    <property type="term" value="C:endoplasmic reticulum membrane"/>
    <property type="evidence" value="ECO:0000318"/>
    <property type="project" value="GO_Central"/>
</dbReference>
<dbReference type="GO" id="GO:0005793">
    <property type="term" value="C:endoplasmic reticulum-Golgi intermediate compartment"/>
    <property type="evidence" value="ECO:0000314"/>
    <property type="project" value="UniProtKB"/>
</dbReference>
<dbReference type="GO" id="GO:0033116">
    <property type="term" value="C:endoplasmic reticulum-Golgi intermediate compartment membrane"/>
    <property type="evidence" value="ECO:0007669"/>
    <property type="project" value="UniProtKB-SubCell"/>
</dbReference>
<dbReference type="GO" id="GO:0070062">
    <property type="term" value="C:extracellular exosome"/>
    <property type="evidence" value="ECO:0007005"/>
    <property type="project" value="UniProtKB"/>
</dbReference>
<dbReference type="GO" id="GO:0005615">
    <property type="term" value="C:extracellular space"/>
    <property type="evidence" value="ECO:0000314"/>
    <property type="project" value="UniProtKB"/>
</dbReference>
<dbReference type="GO" id="GO:0005794">
    <property type="term" value="C:Golgi apparatus"/>
    <property type="evidence" value="ECO:0000314"/>
    <property type="project" value="UniProtKB"/>
</dbReference>
<dbReference type="GO" id="GO:0000139">
    <property type="term" value="C:Golgi membrane"/>
    <property type="evidence" value="ECO:0000318"/>
    <property type="project" value="GO_Central"/>
</dbReference>
<dbReference type="GO" id="GO:0005886">
    <property type="term" value="C:plasma membrane"/>
    <property type="evidence" value="ECO:0000314"/>
    <property type="project" value="UniProtKB"/>
</dbReference>
<dbReference type="GO" id="GO:0030246">
    <property type="term" value="F:carbohydrate binding"/>
    <property type="evidence" value="ECO:0000314"/>
    <property type="project" value="UniProtKB"/>
</dbReference>
<dbReference type="GO" id="GO:0005537">
    <property type="term" value="F:D-mannose binding"/>
    <property type="evidence" value="ECO:0000315"/>
    <property type="project" value="UniProtKB"/>
</dbReference>
<dbReference type="GO" id="GO:0031072">
    <property type="term" value="F:heat shock protein binding"/>
    <property type="evidence" value="ECO:0000353"/>
    <property type="project" value="UniProtKB"/>
</dbReference>
<dbReference type="GO" id="GO:0046872">
    <property type="term" value="F:metal ion binding"/>
    <property type="evidence" value="ECO:0007669"/>
    <property type="project" value="UniProtKB-KW"/>
</dbReference>
<dbReference type="GO" id="GO:0006888">
    <property type="term" value="P:endoplasmic reticulum to Golgi vesicle-mediated transport"/>
    <property type="evidence" value="ECO:0000318"/>
    <property type="project" value="GO_Central"/>
</dbReference>
<dbReference type="GO" id="GO:0050766">
    <property type="term" value="P:positive regulation of phagocytosis"/>
    <property type="evidence" value="ECO:0000315"/>
    <property type="project" value="UniProtKB"/>
</dbReference>
<dbReference type="GO" id="GO:0015031">
    <property type="term" value="P:protein transport"/>
    <property type="evidence" value="ECO:0007669"/>
    <property type="project" value="UniProtKB-KW"/>
</dbReference>
<dbReference type="GO" id="GO:0006890">
    <property type="term" value="P:retrograde vesicle-mediated transport, Golgi to endoplasmic reticulum"/>
    <property type="evidence" value="ECO:0000315"/>
    <property type="project" value="UniProtKB"/>
</dbReference>
<dbReference type="CDD" id="cd06901">
    <property type="entry name" value="lectin_VIP36_VIPL"/>
    <property type="match status" value="1"/>
</dbReference>
<dbReference type="FunFam" id="2.60.120.200:FF:000017">
    <property type="entry name" value="Vesicular integral-membrane protein VIP36"/>
    <property type="match status" value="1"/>
</dbReference>
<dbReference type="Gene3D" id="2.60.120.200">
    <property type="match status" value="1"/>
</dbReference>
<dbReference type="InterPro" id="IPR013320">
    <property type="entry name" value="ConA-like_dom_sf"/>
</dbReference>
<dbReference type="InterPro" id="IPR051136">
    <property type="entry name" value="Intracellular_Lectin-GPT"/>
</dbReference>
<dbReference type="InterPro" id="IPR005052">
    <property type="entry name" value="Lectin_leg"/>
</dbReference>
<dbReference type="InterPro" id="IPR035664">
    <property type="entry name" value="VIP36_lectin"/>
</dbReference>
<dbReference type="PANTHER" id="PTHR12223:SF36">
    <property type="entry name" value="VESICULAR INTEGRAL-MEMBRANE PROTEIN VIP36"/>
    <property type="match status" value="1"/>
</dbReference>
<dbReference type="PANTHER" id="PTHR12223">
    <property type="entry name" value="VESICULAR MANNOSE-BINDING LECTIN"/>
    <property type="match status" value="1"/>
</dbReference>
<dbReference type="Pfam" id="PF03388">
    <property type="entry name" value="Lectin_leg-like"/>
    <property type="match status" value="1"/>
</dbReference>
<dbReference type="SUPFAM" id="SSF49899">
    <property type="entry name" value="Concanavalin A-like lectins/glucanases"/>
    <property type="match status" value="1"/>
</dbReference>
<dbReference type="PROSITE" id="PS51328">
    <property type="entry name" value="L_LECTIN_LIKE"/>
    <property type="match status" value="1"/>
</dbReference>
<comment type="function">
    <text evidence="1">Plays a role as an intracellular lectin in the early secretory pathway. Interacts with N-acetyl-D-galactosamine and high-mannose type glycans and may also bind to O-linked glycans. Involved in the transport and sorting of glycoproteins carrying high mannose-type glycans (By similarity).</text>
</comment>
<comment type="cofactor">
    <cofactor evidence="1">
        <name>Ca(2+)</name>
        <dbReference type="ChEBI" id="CHEBI:29108"/>
    </cofactor>
    <text evidence="1">Binds 2 calcium ions per subunit.</text>
</comment>
<comment type="subcellular location">
    <subcellularLocation>
        <location evidence="4">Endoplasmic reticulum-Golgi intermediate compartment membrane</location>
        <topology evidence="4">Single-pass type I membrane protein</topology>
    </subcellularLocation>
    <subcellularLocation>
        <location evidence="4">Golgi apparatus membrane</location>
        <topology evidence="4">Single-pass membrane protein</topology>
    </subcellularLocation>
    <subcellularLocation>
        <location evidence="4">Endoplasmic reticulum membrane</location>
        <topology evidence="4">Single-pass type I membrane protein</topology>
    </subcellularLocation>
</comment>
<comment type="tissue specificity">
    <text>Ubiquitous.</text>
</comment>
<organism>
    <name type="scientific">Homo sapiens</name>
    <name type="common">Human</name>
    <dbReference type="NCBI Taxonomy" id="9606"/>
    <lineage>
        <taxon>Eukaryota</taxon>
        <taxon>Metazoa</taxon>
        <taxon>Chordata</taxon>
        <taxon>Craniata</taxon>
        <taxon>Vertebrata</taxon>
        <taxon>Euteleostomi</taxon>
        <taxon>Mammalia</taxon>
        <taxon>Eutheria</taxon>
        <taxon>Euarchontoglires</taxon>
        <taxon>Primates</taxon>
        <taxon>Haplorrhini</taxon>
        <taxon>Catarrhini</taxon>
        <taxon>Hominidae</taxon>
        <taxon>Homo</taxon>
    </lineage>
</organism>
<sequence>MAAEGWIWRWGWGRRCLGRPGLLGPGPGPTTPLFLLLLLGSVTADITDGNSEHLKREHSLIKPYQGVGSSSMPLWDFQGSTMLTSQYVRLTPDERSKEGSIWNHQPCFLKDWEMHVHFKVHGTGKKNLHGDGIALWYTRDRLVPGPVFGSKDNFHGLAIFLDTYPNDETTERVFPYISVMVNNGSLSYDHSKDGRWTELAGCTADFRNRDHDTFLAVRYSRGRLTVMTDLEDKNEWKNCIDITGVRLPTGYYFGASAGTGDLSDNHDIISMKLFQLMVEHTPDEESIDWTKIEPSVNFLKSPKDNVDDPTGNFRSGPLTGWRVFLLLLCALLGIVVCAVVGAVVFQKRQERNKRFY</sequence>
<accession>Q12907</accession>
<accession>Q53HH1</accession>
<gene>
    <name type="primary">LMAN2</name>
    <name type="synonym">C5orf8</name>
</gene>
<feature type="signal peptide" evidence="2 7">
    <location>
        <begin position="1"/>
        <end position="44"/>
    </location>
</feature>
<feature type="chain" id="PRO_0000017666" description="Vesicular integral-membrane protein VIP36">
    <location>
        <begin position="45"/>
        <end position="356"/>
    </location>
</feature>
<feature type="topological domain" description="Lumenal" evidence="2">
    <location>
        <begin position="45"/>
        <end position="322"/>
    </location>
</feature>
<feature type="transmembrane region" description="Helical" evidence="2">
    <location>
        <begin position="323"/>
        <end position="345"/>
    </location>
</feature>
<feature type="topological domain" description="Cytoplasmic" evidence="2">
    <location>
        <begin position="346"/>
        <end position="356"/>
    </location>
</feature>
<feature type="domain" description="L-type lectin-like" evidence="3">
    <location>
        <begin position="52"/>
        <end position="276"/>
    </location>
</feature>
<feature type="binding site" evidence="3">
    <location>
        <position position="96"/>
    </location>
    <ligand>
        <name>a carbohydrate</name>
        <dbReference type="ChEBI" id="CHEBI:16646"/>
    </ligand>
</feature>
<feature type="binding site" evidence="3">
    <location>
        <position position="131"/>
    </location>
    <ligand>
        <name>a carbohydrate</name>
        <dbReference type="ChEBI" id="CHEBI:16646"/>
    </ligand>
</feature>
<feature type="binding site" evidence="3">
    <location>
        <position position="162"/>
    </location>
    <ligand>
        <name>Ca(2+)</name>
        <dbReference type="ChEBI" id="CHEBI:29108"/>
    </ligand>
</feature>
<feature type="binding site" evidence="3">
    <location>
        <begin position="164"/>
        <end position="166"/>
    </location>
    <ligand>
        <name>a carbohydrate</name>
        <dbReference type="ChEBI" id="CHEBI:16646"/>
    </ligand>
</feature>
<feature type="binding site" evidence="3">
    <location>
        <position position="164"/>
    </location>
    <ligand>
        <name>Ca(2+)</name>
        <dbReference type="ChEBI" id="CHEBI:29108"/>
    </ligand>
</feature>
<feature type="binding site" evidence="3">
    <location>
        <position position="166"/>
    </location>
    <ligand>
        <name>Ca(2+)</name>
        <dbReference type="ChEBI" id="CHEBI:29108"/>
    </ligand>
</feature>
<feature type="binding site" evidence="3">
    <location>
        <position position="190"/>
    </location>
    <ligand>
        <name>a carbohydrate</name>
        <dbReference type="ChEBI" id="CHEBI:16646"/>
    </ligand>
</feature>
<feature type="binding site" evidence="3">
    <location>
        <position position="193"/>
    </location>
    <ligand>
        <name>Ca(2+)</name>
        <dbReference type="ChEBI" id="CHEBI:29108"/>
    </ligand>
</feature>
<feature type="binding site" evidence="3">
    <location>
        <begin position="260"/>
        <end position="262"/>
    </location>
    <ligand>
        <name>a carbohydrate</name>
        <dbReference type="ChEBI" id="CHEBI:16646"/>
    </ligand>
</feature>
<feature type="glycosylation site" description="N-linked (GlcNAc...) asparagine" evidence="5">
    <location>
        <position position="183"/>
    </location>
</feature>
<feature type="disulfide bond" evidence="3">
    <location>
        <begin position="202"/>
        <end position="239"/>
    </location>
</feature>
<feature type="sequence conflict" description="In Ref. 2; BAD96329." evidence="6" ref="2">
    <original>H</original>
    <variation>R</variation>
    <location>
        <position position="266"/>
    </location>
</feature>
<name>LMAN2_HUMAN</name>
<protein>
    <recommendedName>
        <fullName>Vesicular integral-membrane protein VIP36</fullName>
    </recommendedName>
    <alternativeName>
        <fullName>Glycoprotein GP36b</fullName>
    </alternativeName>
    <alternativeName>
        <fullName>Lectin mannose-binding 2</fullName>
    </alternativeName>
    <alternativeName>
        <fullName>Vesicular integral-membrane protein 36</fullName>
        <shortName>VIP36</shortName>
    </alternativeName>
</protein>
<reference key="1">
    <citation type="submission" date="1994-06" db="EMBL/GenBank/DDBJ databases">
        <title>Human GP36b glycoprotein of the endoplasmic reticulum.</title>
        <authorList>
            <person name="Hartmann E."/>
            <person name="Reimann B."/>
            <person name="Goerlich D."/>
            <person name="Rapoport T.A."/>
            <person name="Prehn S."/>
        </authorList>
    </citation>
    <scope>NUCLEOTIDE SEQUENCE [MRNA]</scope>
</reference>
<reference key="2">
    <citation type="submission" date="2005-04" db="EMBL/GenBank/DDBJ databases">
        <authorList>
            <person name="Suzuki Y."/>
            <person name="Sugano S."/>
            <person name="Totoki Y."/>
            <person name="Toyoda A."/>
            <person name="Takeda T."/>
            <person name="Sakaki Y."/>
            <person name="Tanaka A."/>
            <person name="Yokoyama S."/>
        </authorList>
    </citation>
    <scope>NUCLEOTIDE SEQUENCE [LARGE SCALE MRNA]</scope>
    <source>
        <tissue>Smooth muscle</tissue>
    </source>
</reference>
<reference key="3">
    <citation type="journal article" date="2004" name="Genome Res.">
        <title>The status, quality, and expansion of the NIH full-length cDNA project: the Mammalian Gene Collection (MGC).</title>
        <authorList>
            <consortium name="The MGC Project Team"/>
        </authorList>
    </citation>
    <scope>NUCLEOTIDE SEQUENCE [LARGE SCALE MRNA]</scope>
    <source>
        <tissue>Brain</tissue>
    </source>
</reference>
<reference key="4">
    <citation type="journal article" date="1999" name="J. Cell Sci.">
        <title>VIP36 localisation to the early secretory pathway.</title>
        <authorList>
            <person name="Fullekrug J."/>
            <person name="Scheiffele P."/>
            <person name="Simons K."/>
        </authorList>
    </citation>
    <scope>SUBCELLULAR LOCATION</scope>
</reference>
<reference key="5">
    <citation type="journal article" date="2003" name="Nat. Biotechnol.">
        <title>Identification and quantification of N-linked glycoproteins using hydrazide chemistry, stable isotope labeling and mass spectrometry.</title>
        <authorList>
            <person name="Zhang H."/>
            <person name="Li X.-J."/>
            <person name="Martin D.B."/>
            <person name="Aebersold R."/>
        </authorList>
    </citation>
    <scope>GLYCOSYLATION AT ASN-183</scope>
</reference>
<reference key="6">
    <citation type="journal article" date="2011" name="BMC Syst. Biol.">
        <title>Initial characterization of the human central proteome.</title>
        <authorList>
            <person name="Burkard T.R."/>
            <person name="Planyavsky M."/>
            <person name="Kaupe I."/>
            <person name="Breitwieser F.P."/>
            <person name="Buerckstuemmer T."/>
            <person name="Bennett K.L."/>
            <person name="Superti-Furga G."/>
            <person name="Colinge J."/>
        </authorList>
    </citation>
    <scope>IDENTIFICATION BY MASS SPECTROMETRY [LARGE SCALE ANALYSIS]</scope>
</reference>
<reference key="7">
    <citation type="journal article" date="2014" name="J. Proteomics">
        <title>An enzyme assisted RP-RPLC approach for in-depth analysis of human liver phosphoproteome.</title>
        <authorList>
            <person name="Bian Y."/>
            <person name="Song C."/>
            <person name="Cheng K."/>
            <person name="Dong M."/>
            <person name="Wang F."/>
            <person name="Huang J."/>
            <person name="Sun D."/>
            <person name="Wang L."/>
            <person name="Ye M."/>
            <person name="Zou H."/>
        </authorList>
    </citation>
    <scope>IDENTIFICATION BY MASS SPECTROMETRY [LARGE SCALE ANALYSIS]</scope>
    <source>
        <tissue>Liver</tissue>
    </source>
</reference>
<reference key="8">
    <citation type="journal article" date="2015" name="Proteomics">
        <title>N-terminome analysis of the human mitochondrial proteome.</title>
        <authorList>
            <person name="Vaca Jacome A.S."/>
            <person name="Rabilloud T."/>
            <person name="Schaeffer-Reiss C."/>
            <person name="Rompais M."/>
            <person name="Ayoub D."/>
            <person name="Lane L."/>
            <person name="Bairoch A."/>
            <person name="Van Dorsselaer A."/>
            <person name="Carapito C."/>
        </authorList>
    </citation>
    <scope>CLEAVAGE OF SIGNAL PEPTIDE [LARGE SCALE ANALYSIS] AFTER ALA-44</scope>
    <scope>IDENTIFICATION BY MASS SPECTROMETRY [LARGE SCALE ANALYSIS]</scope>
</reference>
<keyword id="KW-0106">Calcium</keyword>
<keyword id="KW-1015">Disulfide bond</keyword>
<keyword id="KW-0256">Endoplasmic reticulum</keyword>
<keyword id="KW-0325">Glycoprotein</keyword>
<keyword id="KW-0333">Golgi apparatus</keyword>
<keyword id="KW-0430">Lectin</keyword>
<keyword id="KW-0472">Membrane</keyword>
<keyword id="KW-0479">Metal-binding</keyword>
<keyword id="KW-0653">Protein transport</keyword>
<keyword id="KW-1267">Proteomics identification</keyword>
<keyword id="KW-1185">Reference proteome</keyword>
<keyword id="KW-0732">Signal</keyword>
<keyword id="KW-0812">Transmembrane</keyword>
<keyword id="KW-1133">Transmembrane helix</keyword>
<keyword id="KW-0813">Transport</keyword>
<evidence type="ECO:0000250" key="1"/>
<evidence type="ECO:0000255" key="2"/>
<evidence type="ECO:0000255" key="3">
    <source>
        <dbReference type="PROSITE-ProRule" id="PRU00658"/>
    </source>
</evidence>
<evidence type="ECO:0000269" key="4">
    <source>
    </source>
</evidence>
<evidence type="ECO:0000269" key="5">
    <source>
    </source>
</evidence>
<evidence type="ECO:0000305" key="6"/>
<evidence type="ECO:0007744" key="7">
    <source>
    </source>
</evidence>
<proteinExistence type="evidence at protein level"/>